<gene>
    <name evidence="1" type="primary">rplM</name>
    <name type="ordered locus">jhp_0077</name>
</gene>
<comment type="function">
    <text evidence="1">This protein is one of the early assembly proteins of the 50S ribosomal subunit, although it is not seen to bind rRNA by itself. It is important during the early stages of 50S assembly.</text>
</comment>
<comment type="subunit">
    <text evidence="1">Part of the 50S ribosomal subunit.</text>
</comment>
<comment type="similarity">
    <text evidence="1">Belongs to the universal ribosomal protein uL13 family.</text>
</comment>
<keyword id="KW-0687">Ribonucleoprotein</keyword>
<keyword id="KW-0689">Ribosomal protein</keyword>
<organism>
    <name type="scientific">Helicobacter pylori (strain J99 / ATCC 700824)</name>
    <name type="common">Campylobacter pylori J99</name>
    <dbReference type="NCBI Taxonomy" id="85963"/>
    <lineage>
        <taxon>Bacteria</taxon>
        <taxon>Pseudomonadati</taxon>
        <taxon>Campylobacterota</taxon>
        <taxon>Epsilonproteobacteria</taxon>
        <taxon>Campylobacterales</taxon>
        <taxon>Helicobacteraceae</taxon>
        <taxon>Helicobacter</taxon>
    </lineage>
</organism>
<proteinExistence type="inferred from homology"/>
<reference key="1">
    <citation type="journal article" date="1999" name="Nature">
        <title>Genomic sequence comparison of two unrelated isolates of the human gastric pathogen Helicobacter pylori.</title>
        <authorList>
            <person name="Alm R.A."/>
            <person name="Ling L.-S.L."/>
            <person name="Moir D.T."/>
            <person name="King B.L."/>
            <person name="Brown E.D."/>
            <person name="Doig P.C."/>
            <person name="Smith D.R."/>
            <person name="Noonan B."/>
            <person name="Guild B.C."/>
            <person name="deJonge B.L."/>
            <person name="Carmel G."/>
            <person name="Tummino P.J."/>
            <person name="Caruso A."/>
            <person name="Uria-Nickelsen M."/>
            <person name="Mills D.M."/>
            <person name="Ives C."/>
            <person name="Gibson R."/>
            <person name="Merberg D."/>
            <person name="Mills S.D."/>
            <person name="Jiang Q."/>
            <person name="Taylor D.E."/>
            <person name="Vovis G.F."/>
            <person name="Trust T.J."/>
        </authorList>
    </citation>
    <scope>NUCLEOTIDE SEQUENCE [LARGE SCALE GENOMIC DNA]</scope>
    <source>
        <strain>J99 / ATCC 700824</strain>
    </source>
</reference>
<feature type="chain" id="PRO_0000133740" description="Large ribosomal subunit protein uL13">
    <location>
        <begin position="1"/>
        <end position="141"/>
    </location>
</feature>
<evidence type="ECO:0000255" key="1">
    <source>
        <dbReference type="HAMAP-Rule" id="MF_01366"/>
    </source>
</evidence>
<evidence type="ECO:0000305" key="2"/>
<name>RL13_HELPJ</name>
<accession>Q9ZMY6</accession>
<protein>
    <recommendedName>
        <fullName evidence="1">Large ribosomal subunit protein uL13</fullName>
    </recommendedName>
    <alternativeName>
        <fullName evidence="2">50S ribosomal protein L13</fullName>
    </alternativeName>
</protein>
<dbReference type="EMBL" id="AE001439">
    <property type="protein sequence ID" value="AAD05661.1"/>
    <property type="molecule type" value="Genomic_DNA"/>
</dbReference>
<dbReference type="PIR" id="H71975">
    <property type="entry name" value="H71975"/>
</dbReference>
<dbReference type="RefSeq" id="WP_000167675.1">
    <property type="nucleotide sequence ID" value="NZ_CP011330.1"/>
</dbReference>
<dbReference type="SMR" id="Q9ZMY6"/>
<dbReference type="GeneID" id="93236455"/>
<dbReference type="KEGG" id="hpj:jhp_0077"/>
<dbReference type="PATRIC" id="fig|85963.30.peg.956"/>
<dbReference type="eggNOG" id="COG0102">
    <property type="taxonomic scope" value="Bacteria"/>
</dbReference>
<dbReference type="Proteomes" id="UP000000804">
    <property type="component" value="Chromosome"/>
</dbReference>
<dbReference type="GO" id="GO:0022625">
    <property type="term" value="C:cytosolic large ribosomal subunit"/>
    <property type="evidence" value="ECO:0007669"/>
    <property type="project" value="TreeGrafter"/>
</dbReference>
<dbReference type="GO" id="GO:0003729">
    <property type="term" value="F:mRNA binding"/>
    <property type="evidence" value="ECO:0007669"/>
    <property type="project" value="TreeGrafter"/>
</dbReference>
<dbReference type="GO" id="GO:0003735">
    <property type="term" value="F:structural constituent of ribosome"/>
    <property type="evidence" value="ECO:0007669"/>
    <property type="project" value="InterPro"/>
</dbReference>
<dbReference type="GO" id="GO:0017148">
    <property type="term" value="P:negative regulation of translation"/>
    <property type="evidence" value="ECO:0007669"/>
    <property type="project" value="TreeGrafter"/>
</dbReference>
<dbReference type="GO" id="GO:0006412">
    <property type="term" value="P:translation"/>
    <property type="evidence" value="ECO:0007669"/>
    <property type="project" value="UniProtKB-UniRule"/>
</dbReference>
<dbReference type="CDD" id="cd00392">
    <property type="entry name" value="Ribosomal_L13"/>
    <property type="match status" value="1"/>
</dbReference>
<dbReference type="FunFam" id="3.90.1180.10:FF:000004">
    <property type="entry name" value="50S ribosomal protein L13"/>
    <property type="match status" value="1"/>
</dbReference>
<dbReference type="Gene3D" id="3.90.1180.10">
    <property type="entry name" value="Ribosomal protein L13"/>
    <property type="match status" value="1"/>
</dbReference>
<dbReference type="HAMAP" id="MF_01366">
    <property type="entry name" value="Ribosomal_uL13"/>
    <property type="match status" value="1"/>
</dbReference>
<dbReference type="InterPro" id="IPR005822">
    <property type="entry name" value="Ribosomal_uL13"/>
</dbReference>
<dbReference type="InterPro" id="IPR005823">
    <property type="entry name" value="Ribosomal_uL13_bac-type"/>
</dbReference>
<dbReference type="InterPro" id="IPR023563">
    <property type="entry name" value="Ribosomal_uL13_CS"/>
</dbReference>
<dbReference type="InterPro" id="IPR036899">
    <property type="entry name" value="Ribosomal_uL13_sf"/>
</dbReference>
<dbReference type="NCBIfam" id="TIGR01066">
    <property type="entry name" value="rplM_bact"/>
    <property type="match status" value="1"/>
</dbReference>
<dbReference type="PANTHER" id="PTHR11545:SF2">
    <property type="entry name" value="LARGE RIBOSOMAL SUBUNIT PROTEIN UL13M"/>
    <property type="match status" value="1"/>
</dbReference>
<dbReference type="PANTHER" id="PTHR11545">
    <property type="entry name" value="RIBOSOMAL PROTEIN L13"/>
    <property type="match status" value="1"/>
</dbReference>
<dbReference type="Pfam" id="PF00572">
    <property type="entry name" value="Ribosomal_L13"/>
    <property type="match status" value="1"/>
</dbReference>
<dbReference type="PIRSF" id="PIRSF002181">
    <property type="entry name" value="Ribosomal_L13"/>
    <property type="match status" value="1"/>
</dbReference>
<dbReference type="SUPFAM" id="SSF52161">
    <property type="entry name" value="Ribosomal protein L13"/>
    <property type="match status" value="1"/>
</dbReference>
<dbReference type="PROSITE" id="PS00783">
    <property type="entry name" value="RIBOSOMAL_L13"/>
    <property type="match status" value="1"/>
</dbReference>
<sequence>MTKTAKVNDIVRDWVVLDAKDKVFGRLITEIAVLLRGKHRPFYTPNVDCGDFVVVINANKVKFSGMKLEDKEYFTHSGYFGSTKSKTLQEMLEKTPEKLYHLAVRGMLPKTKLGKAMIKKLKVYRDDKHPHTAQTSKKDAK</sequence>